<organism>
    <name type="scientific">Listeria innocua serovar 6a (strain ATCC BAA-680 / CLIP 11262)</name>
    <dbReference type="NCBI Taxonomy" id="272626"/>
    <lineage>
        <taxon>Bacteria</taxon>
        <taxon>Bacillati</taxon>
        <taxon>Bacillota</taxon>
        <taxon>Bacilli</taxon>
        <taxon>Bacillales</taxon>
        <taxon>Listeriaceae</taxon>
        <taxon>Listeria</taxon>
    </lineage>
</organism>
<name>ATPD_LISIN</name>
<reference key="1">
    <citation type="journal article" date="2001" name="Science">
        <title>Comparative genomics of Listeria species.</title>
        <authorList>
            <person name="Glaser P."/>
            <person name="Frangeul L."/>
            <person name="Buchrieser C."/>
            <person name="Rusniok C."/>
            <person name="Amend A."/>
            <person name="Baquero F."/>
            <person name="Berche P."/>
            <person name="Bloecker H."/>
            <person name="Brandt P."/>
            <person name="Chakraborty T."/>
            <person name="Charbit A."/>
            <person name="Chetouani F."/>
            <person name="Couve E."/>
            <person name="de Daruvar A."/>
            <person name="Dehoux P."/>
            <person name="Domann E."/>
            <person name="Dominguez-Bernal G."/>
            <person name="Duchaud E."/>
            <person name="Durant L."/>
            <person name="Dussurget O."/>
            <person name="Entian K.-D."/>
            <person name="Fsihi H."/>
            <person name="Garcia-del Portillo F."/>
            <person name="Garrido P."/>
            <person name="Gautier L."/>
            <person name="Goebel W."/>
            <person name="Gomez-Lopez N."/>
            <person name="Hain T."/>
            <person name="Hauf J."/>
            <person name="Jackson D."/>
            <person name="Jones L.-M."/>
            <person name="Kaerst U."/>
            <person name="Kreft J."/>
            <person name="Kuhn M."/>
            <person name="Kunst F."/>
            <person name="Kurapkat G."/>
            <person name="Madueno E."/>
            <person name="Maitournam A."/>
            <person name="Mata Vicente J."/>
            <person name="Ng E."/>
            <person name="Nedjari H."/>
            <person name="Nordsiek G."/>
            <person name="Novella S."/>
            <person name="de Pablos B."/>
            <person name="Perez-Diaz J.-C."/>
            <person name="Purcell R."/>
            <person name="Remmel B."/>
            <person name="Rose M."/>
            <person name="Schlueter T."/>
            <person name="Simoes N."/>
            <person name="Tierrez A."/>
            <person name="Vazquez-Boland J.-A."/>
            <person name="Voss H."/>
            <person name="Wehland J."/>
            <person name="Cossart P."/>
        </authorList>
    </citation>
    <scope>NUCLEOTIDE SEQUENCE [LARGE SCALE GENOMIC DNA]</scope>
    <source>
        <strain>ATCC BAA-680 / CLIP 11262</strain>
    </source>
</reference>
<proteinExistence type="inferred from homology"/>
<protein>
    <recommendedName>
        <fullName evidence="1">ATP synthase subunit delta</fullName>
    </recommendedName>
    <alternativeName>
        <fullName evidence="1">ATP synthase F(1) sector subunit delta</fullName>
    </alternativeName>
    <alternativeName>
        <fullName evidence="1">F-type ATPase subunit delta</fullName>
        <shortName evidence="1">F-ATPase subunit delta</shortName>
    </alternativeName>
</protein>
<gene>
    <name evidence="1" type="primary">atpH</name>
    <name type="ordered locus">lin2676</name>
</gene>
<sequence>MSKDLEVAGRYANALFQVAQDKDLVDVFSEELTELKAALNANKDFVKLLENPTFTTEQKKNLASAVFEKINPTLRDFIYLLIDRSREDYLSVIADVYQKRVNDLRGVADADVYSVVPLSEQELTALSRVFAAKMNKTKLNIQNHIDKSLLGGVKVVIGTRIYDDSLKTKLKDMERQIKA</sequence>
<feature type="chain" id="PRO_0000382112" description="ATP synthase subunit delta">
    <location>
        <begin position="1"/>
        <end position="179"/>
    </location>
</feature>
<evidence type="ECO:0000255" key="1">
    <source>
        <dbReference type="HAMAP-Rule" id="MF_01416"/>
    </source>
</evidence>
<dbReference type="EMBL" id="AL596173">
    <property type="protein sequence ID" value="CAC97902.1"/>
    <property type="molecule type" value="Genomic_DNA"/>
</dbReference>
<dbReference type="PIR" id="AF1766">
    <property type="entry name" value="AF1766"/>
</dbReference>
<dbReference type="RefSeq" id="WP_003772291.1">
    <property type="nucleotide sequence ID" value="NC_003212.1"/>
</dbReference>
<dbReference type="SMR" id="Q927W1"/>
<dbReference type="STRING" id="272626.gene:17567056"/>
<dbReference type="KEGG" id="lin:atpH"/>
<dbReference type="eggNOG" id="COG0712">
    <property type="taxonomic scope" value="Bacteria"/>
</dbReference>
<dbReference type="HOGENOM" id="CLU_085114_1_1_9"/>
<dbReference type="OrthoDB" id="9802471at2"/>
<dbReference type="Proteomes" id="UP000002513">
    <property type="component" value="Chromosome"/>
</dbReference>
<dbReference type="GO" id="GO:0005886">
    <property type="term" value="C:plasma membrane"/>
    <property type="evidence" value="ECO:0007669"/>
    <property type="project" value="UniProtKB-SubCell"/>
</dbReference>
<dbReference type="GO" id="GO:0045259">
    <property type="term" value="C:proton-transporting ATP synthase complex"/>
    <property type="evidence" value="ECO:0007669"/>
    <property type="project" value="UniProtKB-KW"/>
</dbReference>
<dbReference type="GO" id="GO:0046933">
    <property type="term" value="F:proton-transporting ATP synthase activity, rotational mechanism"/>
    <property type="evidence" value="ECO:0007669"/>
    <property type="project" value="UniProtKB-UniRule"/>
</dbReference>
<dbReference type="Gene3D" id="1.10.520.20">
    <property type="entry name" value="N-terminal domain of the delta subunit of the F1F0-ATP synthase"/>
    <property type="match status" value="1"/>
</dbReference>
<dbReference type="HAMAP" id="MF_01416">
    <property type="entry name" value="ATP_synth_delta_bact"/>
    <property type="match status" value="1"/>
</dbReference>
<dbReference type="InterPro" id="IPR026015">
    <property type="entry name" value="ATP_synth_OSCP/delta_N_sf"/>
</dbReference>
<dbReference type="InterPro" id="IPR000711">
    <property type="entry name" value="ATPase_OSCP/dsu"/>
</dbReference>
<dbReference type="NCBIfam" id="TIGR01145">
    <property type="entry name" value="ATP_synt_delta"/>
    <property type="match status" value="1"/>
</dbReference>
<dbReference type="NCBIfam" id="NF004403">
    <property type="entry name" value="PRK05758.2-4"/>
    <property type="match status" value="1"/>
</dbReference>
<dbReference type="PANTHER" id="PTHR11910">
    <property type="entry name" value="ATP SYNTHASE DELTA CHAIN"/>
    <property type="match status" value="1"/>
</dbReference>
<dbReference type="Pfam" id="PF00213">
    <property type="entry name" value="OSCP"/>
    <property type="match status" value="1"/>
</dbReference>
<dbReference type="PRINTS" id="PR00125">
    <property type="entry name" value="ATPASEDELTA"/>
</dbReference>
<dbReference type="SUPFAM" id="SSF47928">
    <property type="entry name" value="N-terminal domain of the delta subunit of the F1F0-ATP synthase"/>
    <property type="match status" value="1"/>
</dbReference>
<keyword id="KW-0066">ATP synthesis</keyword>
<keyword id="KW-1003">Cell membrane</keyword>
<keyword id="KW-0139">CF(1)</keyword>
<keyword id="KW-0375">Hydrogen ion transport</keyword>
<keyword id="KW-0406">Ion transport</keyword>
<keyword id="KW-0472">Membrane</keyword>
<keyword id="KW-0813">Transport</keyword>
<comment type="function">
    <text evidence="1">F(1)F(0) ATP synthase produces ATP from ADP in the presence of a proton or sodium gradient. F-type ATPases consist of two structural domains, F(1) containing the extramembraneous catalytic core and F(0) containing the membrane proton channel, linked together by a central stalk and a peripheral stalk. During catalysis, ATP synthesis in the catalytic domain of F(1) is coupled via a rotary mechanism of the central stalk subunits to proton translocation.</text>
</comment>
<comment type="function">
    <text evidence="1">This protein is part of the stalk that links CF(0) to CF(1). It either transmits conformational changes from CF(0) to CF(1) or is implicated in proton conduction.</text>
</comment>
<comment type="subunit">
    <text evidence="1">F-type ATPases have 2 components, F(1) - the catalytic core - and F(0) - the membrane proton channel. F(1) has five subunits: alpha(3), beta(3), gamma(1), delta(1), epsilon(1). F(0) has three main subunits: a(1), b(2) and c(10-14). The alpha and beta chains form an alternating ring which encloses part of the gamma chain. F(1) is attached to F(0) by a central stalk formed by the gamma and epsilon chains, while a peripheral stalk is formed by the delta and b chains.</text>
</comment>
<comment type="subcellular location">
    <subcellularLocation>
        <location evidence="1">Cell membrane</location>
        <topology evidence="1">Peripheral membrane protein</topology>
    </subcellularLocation>
</comment>
<comment type="similarity">
    <text evidence="1">Belongs to the ATPase delta chain family.</text>
</comment>
<accession>Q927W1</accession>